<proteinExistence type="inferred from homology"/>
<dbReference type="EC" id="3.5.1.5" evidence="1"/>
<dbReference type="EMBL" id="CP000512">
    <property type="protein sequence ID" value="ABM34083.1"/>
    <property type="molecule type" value="Genomic_DNA"/>
</dbReference>
<dbReference type="RefSeq" id="WP_011796580.1">
    <property type="nucleotide sequence ID" value="NC_008752.1"/>
</dbReference>
<dbReference type="SMR" id="A1TSZ5"/>
<dbReference type="STRING" id="397945.Aave_3528"/>
<dbReference type="GeneID" id="79791588"/>
<dbReference type="KEGG" id="aav:Aave_3528"/>
<dbReference type="eggNOG" id="COG0832">
    <property type="taxonomic scope" value="Bacteria"/>
</dbReference>
<dbReference type="HOGENOM" id="CLU_129707_1_1_4"/>
<dbReference type="OrthoDB" id="9797217at2"/>
<dbReference type="UniPathway" id="UPA00258">
    <property type="reaction ID" value="UER00370"/>
</dbReference>
<dbReference type="Proteomes" id="UP000002596">
    <property type="component" value="Chromosome"/>
</dbReference>
<dbReference type="GO" id="GO:0035550">
    <property type="term" value="C:urease complex"/>
    <property type="evidence" value="ECO:0007669"/>
    <property type="project" value="InterPro"/>
</dbReference>
<dbReference type="GO" id="GO:0009039">
    <property type="term" value="F:urease activity"/>
    <property type="evidence" value="ECO:0007669"/>
    <property type="project" value="UniProtKB-UniRule"/>
</dbReference>
<dbReference type="GO" id="GO:0043419">
    <property type="term" value="P:urea catabolic process"/>
    <property type="evidence" value="ECO:0007669"/>
    <property type="project" value="UniProtKB-UniRule"/>
</dbReference>
<dbReference type="CDD" id="cd00407">
    <property type="entry name" value="Urease_beta"/>
    <property type="match status" value="1"/>
</dbReference>
<dbReference type="Gene3D" id="2.10.150.10">
    <property type="entry name" value="Urease, beta subunit"/>
    <property type="match status" value="1"/>
</dbReference>
<dbReference type="HAMAP" id="MF_01954">
    <property type="entry name" value="Urease_beta"/>
    <property type="match status" value="1"/>
</dbReference>
<dbReference type="InterPro" id="IPR002019">
    <property type="entry name" value="Urease_beta-like"/>
</dbReference>
<dbReference type="InterPro" id="IPR036461">
    <property type="entry name" value="Urease_betasu_sf"/>
</dbReference>
<dbReference type="InterPro" id="IPR050069">
    <property type="entry name" value="Urease_subunit"/>
</dbReference>
<dbReference type="NCBIfam" id="NF009682">
    <property type="entry name" value="PRK13203.1"/>
    <property type="match status" value="1"/>
</dbReference>
<dbReference type="NCBIfam" id="TIGR00192">
    <property type="entry name" value="urease_beta"/>
    <property type="match status" value="1"/>
</dbReference>
<dbReference type="PANTHER" id="PTHR33569">
    <property type="entry name" value="UREASE"/>
    <property type="match status" value="1"/>
</dbReference>
<dbReference type="PANTHER" id="PTHR33569:SF1">
    <property type="entry name" value="UREASE"/>
    <property type="match status" value="1"/>
</dbReference>
<dbReference type="Pfam" id="PF00699">
    <property type="entry name" value="Urease_beta"/>
    <property type="match status" value="1"/>
</dbReference>
<dbReference type="SUPFAM" id="SSF51278">
    <property type="entry name" value="Urease, beta-subunit"/>
    <property type="match status" value="1"/>
</dbReference>
<comment type="catalytic activity">
    <reaction evidence="1">
        <text>urea + 2 H2O + H(+) = hydrogencarbonate + 2 NH4(+)</text>
        <dbReference type="Rhea" id="RHEA:20557"/>
        <dbReference type="ChEBI" id="CHEBI:15377"/>
        <dbReference type="ChEBI" id="CHEBI:15378"/>
        <dbReference type="ChEBI" id="CHEBI:16199"/>
        <dbReference type="ChEBI" id="CHEBI:17544"/>
        <dbReference type="ChEBI" id="CHEBI:28938"/>
        <dbReference type="EC" id="3.5.1.5"/>
    </reaction>
</comment>
<comment type="pathway">
    <text evidence="1">Nitrogen metabolism; urea degradation; CO(2) and NH(3) from urea (urease route): step 1/1.</text>
</comment>
<comment type="subunit">
    <text evidence="1">Heterotrimer of UreA (gamma), UreB (beta) and UreC (alpha) subunits. Three heterotrimers associate to form the active enzyme.</text>
</comment>
<comment type="subcellular location">
    <subcellularLocation>
        <location evidence="1">Cytoplasm</location>
    </subcellularLocation>
</comment>
<comment type="similarity">
    <text evidence="1">Belongs to the urease beta subunit family.</text>
</comment>
<feature type="chain" id="PRO_1000070709" description="Urease subunit beta">
    <location>
        <begin position="1"/>
        <end position="116"/>
    </location>
</feature>
<feature type="region of interest" description="Disordered" evidence="2">
    <location>
        <begin position="97"/>
        <end position="116"/>
    </location>
</feature>
<sequence length="116" mass="12500">MVPGELLVDDGEHPLIPCRRTVTLVVRNSADRPIQVGSHYHFAETNGALDFDRAAARGMRLNITSGTAVRFEPGQQRTVELVDFAGSRTVYGFRGDIQGPLDAGTAETAPGLPQQP</sequence>
<gene>
    <name evidence="1" type="primary">ureB</name>
    <name type="ordered locus">Aave_3528</name>
</gene>
<name>URE2_PARC0</name>
<reference key="1">
    <citation type="submission" date="2006-12" db="EMBL/GenBank/DDBJ databases">
        <title>Complete sequence of Acidovorax avenae subsp. citrulli AAC00-1.</title>
        <authorList>
            <person name="Copeland A."/>
            <person name="Lucas S."/>
            <person name="Lapidus A."/>
            <person name="Barry K."/>
            <person name="Detter J.C."/>
            <person name="Glavina del Rio T."/>
            <person name="Dalin E."/>
            <person name="Tice H."/>
            <person name="Pitluck S."/>
            <person name="Kiss H."/>
            <person name="Brettin T."/>
            <person name="Bruce D."/>
            <person name="Han C."/>
            <person name="Tapia R."/>
            <person name="Gilna P."/>
            <person name="Schmutz J."/>
            <person name="Larimer F."/>
            <person name="Land M."/>
            <person name="Hauser L."/>
            <person name="Kyrpides N."/>
            <person name="Kim E."/>
            <person name="Stahl D."/>
            <person name="Richardson P."/>
        </authorList>
    </citation>
    <scope>NUCLEOTIDE SEQUENCE [LARGE SCALE GENOMIC DNA]</scope>
    <source>
        <strain>AAC00-1</strain>
    </source>
</reference>
<organism>
    <name type="scientific">Paracidovorax citrulli (strain AAC00-1)</name>
    <name type="common">Acidovorax citrulli</name>
    <dbReference type="NCBI Taxonomy" id="397945"/>
    <lineage>
        <taxon>Bacteria</taxon>
        <taxon>Pseudomonadati</taxon>
        <taxon>Pseudomonadota</taxon>
        <taxon>Betaproteobacteria</taxon>
        <taxon>Burkholderiales</taxon>
        <taxon>Comamonadaceae</taxon>
        <taxon>Paracidovorax</taxon>
    </lineage>
</organism>
<evidence type="ECO:0000255" key="1">
    <source>
        <dbReference type="HAMAP-Rule" id="MF_01954"/>
    </source>
</evidence>
<evidence type="ECO:0000256" key="2">
    <source>
        <dbReference type="SAM" id="MobiDB-lite"/>
    </source>
</evidence>
<accession>A1TSZ5</accession>
<protein>
    <recommendedName>
        <fullName evidence="1">Urease subunit beta</fullName>
        <ecNumber evidence="1">3.5.1.5</ecNumber>
    </recommendedName>
    <alternativeName>
        <fullName evidence="1">Urea amidohydrolase subunit beta</fullName>
    </alternativeName>
</protein>
<keyword id="KW-0963">Cytoplasm</keyword>
<keyword id="KW-0378">Hydrolase</keyword>